<keyword id="KW-0007">Acetylation</keyword>
<keyword id="KW-0106">Calcium</keyword>
<keyword id="KW-0479">Metal-binding</keyword>
<keyword id="KW-0514">Muscle protein</keyword>
<keyword id="KW-1185">Reference proteome</keyword>
<keyword id="KW-0677">Repeat</keyword>
<feature type="initiator methionine" description="Removed" evidence="1">
    <location>
        <position position="1"/>
    </location>
</feature>
<feature type="chain" id="PRO_0000073704" description="Troponin C, skeletal muscle">
    <location>
        <begin position="2"/>
        <end position="160"/>
    </location>
</feature>
<feature type="domain" description="EF-hand 1" evidence="2">
    <location>
        <begin position="15"/>
        <end position="50"/>
    </location>
</feature>
<feature type="domain" description="EF-hand 2" evidence="2">
    <location>
        <begin position="51"/>
        <end position="86"/>
    </location>
</feature>
<feature type="domain" description="EF-hand 3" evidence="2">
    <location>
        <begin position="91"/>
        <end position="126"/>
    </location>
</feature>
<feature type="domain" description="EF-hand 4" evidence="2">
    <location>
        <begin position="127"/>
        <end position="160"/>
    </location>
</feature>
<feature type="binding site" evidence="2">
    <location>
        <position position="28"/>
    </location>
    <ligand>
        <name>Ca(2+)</name>
        <dbReference type="ChEBI" id="CHEBI:29108"/>
        <label>1</label>
    </ligand>
</feature>
<feature type="binding site" evidence="2">
    <location>
        <position position="30"/>
    </location>
    <ligand>
        <name>Ca(2+)</name>
        <dbReference type="ChEBI" id="CHEBI:29108"/>
        <label>1</label>
    </ligand>
</feature>
<feature type="binding site" evidence="2">
    <location>
        <position position="34"/>
    </location>
    <ligand>
        <name>Ca(2+)</name>
        <dbReference type="ChEBI" id="CHEBI:29108"/>
        <label>1</label>
    </ligand>
</feature>
<feature type="binding site" evidence="2">
    <location>
        <position position="39"/>
    </location>
    <ligand>
        <name>Ca(2+)</name>
        <dbReference type="ChEBI" id="CHEBI:29108"/>
        <label>1</label>
    </ligand>
</feature>
<feature type="binding site" evidence="2">
    <location>
        <position position="64"/>
    </location>
    <ligand>
        <name>Ca(2+)</name>
        <dbReference type="ChEBI" id="CHEBI:29108"/>
        <label>2</label>
    </ligand>
</feature>
<feature type="binding site" evidence="2">
    <location>
        <position position="66"/>
    </location>
    <ligand>
        <name>Ca(2+)</name>
        <dbReference type="ChEBI" id="CHEBI:29108"/>
        <label>2</label>
    </ligand>
</feature>
<feature type="binding site" evidence="2">
    <location>
        <position position="68"/>
    </location>
    <ligand>
        <name>Ca(2+)</name>
        <dbReference type="ChEBI" id="CHEBI:29108"/>
        <label>2</label>
    </ligand>
</feature>
<feature type="binding site" evidence="2">
    <location>
        <position position="70"/>
    </location>
    <ligand>
        <name>Ca(2+)</name>
        <dbReference type="ChEBI" id="CHEBI:29108"/>
        <label>2</label>
    </ligand>
</feature>
<feature type="binding site" evidence="2">
    <location>
        <position position="75"/>
    </location>
    <ligand>
        <name>Ca(2+)</name>
        <dbReference type="ChEBI" id="CHEBI:29108"/>
        <label>2</label>
    </ligand>
</feature>
<feature type="binding site" evidence="2">
    <location>
        <position position="104"/>
    </location>
    <ligand>
        <name>Ca(2+)</name>
        <dbReference type="ChEBI" id="CHEBI:29108"/>
        <label>3</label>
    </ligand>
</feature>
<feature type="binding site" evidence="2">
    <location>
        <position position="106"/>
    </location>
    <ligand>
        <name>Ca(2+)</name>
        <dbReference type="ChEBI" id="CHEBI:29108"/>
        <label>3</label>
    </ligand>
</feature>
<feature type="binding site" evidence="2">
    <location>
        <position position="108"/>
    </location>
    <ligand>
        <name>Ca(2+)</name>
        <dbReference type="ChEBI" id="CHEBI:29108"/>
        <label>3</label>
    </ligand>
</feature>
<feature type="binding site" evidence="2">
    <location>
        <position position="110"/>
    </location>
    <ligand>
        <name>Ca(2+)</name>
        <dbReference type="ChEBI" id="CHEBI:29108"/>
        <label>3</label>
    </ligand>
</feature>
<feature type="binding site" evidence="2">
    <location>
        <position position="115"/>
    </location>
    <ligand>
        <name>Ca(2+)</name>
        <dbReference type="ChEBI" id="CHEBI:29108"/>
        <label>3</label>
    </ligand>
</feature>
<feature type="binding site" evidence="2">
    <location>
        <position position="140"/>
    </location>
    <ligand>
        <name>Ca(2+)</name>
        <dbReference type="ChEBI" id="CHEBI:29108"/>
        <label>4</label>
    </ligand>
</feature>
<feature type="binding site" evidence="2">
    <location>
        <position position="142"/>
    </location>
    <ligand>
        <name>Ca(2+)</name>
        <dbReference type="ChEBI" id="CHEBI:29108"/>
        <label>4</label>
    </ligand>
</feature>
<feature type="binding site" evidence="2">
    <location>
        <position position="144"/>
    </location>
    <ligand>
        <name>Ca(2+)</name>
        <dbReference type="ChEBI" id="CHEBI:29108"/>
        <label>4</label>
    </ligand>
</feature>
<feature type="binding site" evidence="2">
    <location>
        <position position="146"/>
    </location>
    <ligand>
        <name>Ca(2+)</name>
        <dbReference type="ChEBI" id="CHEBI:29108"/>
        <label>4</label>
    </ligand>
</feature>
<feature type="binding site" evidence="2">
    <location>
        <position position="151"/>
    </location>
    <ligand>
        <name>Ca(2+)</name>
        <dbReference type="ChEBI" id="CHEBI:29108"/>
        <label>4</label>
    </ligand>
</feature>
<feature type="modified residue" description="N-acetylthreonine" evidence="1">
    <location>
        <position position="2"/>
    </location>
</feature>
<protein>
    <recommendedName>
        <fullName>Troponin C, skeletal muscle</fullName>
    </recommendedName>
    <alternativeName>
        <fullName>STNC</fullName>
    </alternativeName>
</protein>
<sequence>MTDQQAEARSYLSEEMIAEFKAAFDMFDADGGGDISVKELGTVMRMLGQTPTKEELDAIIEEVDEDGSGTIDFEEFLVMMVRQMKEDAKGKSEEELAECFRIFDRNADGYIDAEELAEIFRASGEHVTEEEIESLMKDGDKNNDGRIDFDEFLKMMEGVQ</sequence>
<reference key="1">
    <citation type="journal article" date="1990" name="J. Biol. Chem.">
        <title>The structure and regulation of expression of the murine fast skeletal troponin C gene. Identification of a developmentally regulated, muscle-specific transcriptional enhancer.</title>
        <authorList>
            <person name="Parmacek M.S."/>
            <person name="Bengur A.R."/>
            <person name="Vora A.J."/>
            <person name="Leiden J.M."/>
        </authorList>
    </citation>
    <scope>NUCLEOTIDE SEQUENCE [GENOMIC DNA]</scope>
    <source>
        <strain>BALB/cJ</strain>
    </source>
</reference>
<reference key="2">
    <citation type="journal article" date="2004" name="Genome Res.">
        <title>The status, quality, and expansion of the NIH full-length cDNA project: the Mammalian Gene Collection (MGC).</title>
        <authorList>
            <consortium name="The MGC Project Team"/>
        </authorList>
    </citation>
    <scope>NUCLEOTIDE SEQUENCE [LARGE SCALE MRNA]</scope>
    <source>
        <strain>C57BL/6J</strain>
        <tissue>Mammary gland</tissue>
    </source>
</reference>
<reference key="3">
    <citation type="journal article" date="2010" name="Cell">
        <title>A tissue-specific atlas of mouse protein phosphorylation and expression.</title>
        <authorList>
            <person name="Huttlin E.L."/>
            <person name="Jedrychowski M.P."/>
            <person name="Elias J.E."/>
            <person name="Goswami T."/>
            <person name="Rad R."/>
            <person name="Beausoleil S.A."/>
            <person name="Villen J."/>
            <person name="Haas W."/>
            <person name="Sowa M.E."/>
            <person name="Gygi S.P."/>
        </authorList>
    </citation>
    <scope>IDENTIFICATION BY MASS SPECTROMETRY [LARGE SCALE ANALYSIS]</scope>
    <source>
        <tissue>Brown adipose tissue</tissue>
    </source>
</reference>
<dbReference type="EMBL" id="M57590">
    <property type="protein sequence ID" value="AAA37642.1"/>
    <property type="molecule type" value="Genomic_DNA"/>
</dbReference>
<dbReference type="EMBL" id="BC024390">
    <property type="protein sequence ID" value="AAH24390.1"/>
    <property type="molecule type" value="mRNA"/>
</dbReference>
<dbReference type="CCDS" id="CCDS17056.1"/>
<dbReference type="PIR" id="A38383">
    <property type="entry name" value="A38383"/>
</dbReference>
<dbReference type="RefSeq" id="NP_033420.1">
    <property type="nucleotide sequence ID" value="NM_009394.2"/>
</dbReference>
<dbReference type="BMRB" id="P20801"/>
<dbReference type="SMR" id="P20801"/>
<dbReference type="BioGRID" id="204239">
    <property type="interactions" value="1"/>
</dbReference>
<dbReference type="FunCoup" id="P20801">
    <property type="interactions" value="293"/>
</dbReference>
<dbReference type="IntAct" id="P20801">
    <property type="interactions" value="1"/>
</dbReference>
<dbReference type="MINT" id="P20801"/>
<dbReference type="STRING" id="10090.ENSMUSP00000099384"/>
<dbReference type="iPTMnet" id="P20801"/>
<dbReference type="PhosphoSitePlus" id="P20801"/>
<dbReference type="jPOST" id="P20801"/>
<dbReference type="PaxDb" id="10090-ENSMUSP00000099384"/>
<dbReference type="PeptideAtlas" id="P20801"/>
<dbReference type="ProteomicsDB" id="259601"/>
<dbReference type="Antibodypedia" id="27766">
    <property type="antibodies" value="156 antibodies from 25 providers"/>
</dbReference>
<dbReference type="DNASU" id="21925"/>
<dbReference type="Ensembl" id="ENSMUST00000103095.5">
    <property type="protein sequence ID" value="ENSMUSP00000099384.5"/>
    <property type="gene ID" value="ENSMUSG00000017300.10"/>
</dbReference>
<dbReference type="GeneID" id="21925"/>
<dbReference type="KEGG" id="mmu:21925"/>
<dbReference type="UCSC" id="uc008nvz.1">
    <property type="organism name" value="mouse"/>
</dbReference>
<dbReference type="AGR" id="MGI:98780"/>
<dbReference type="CTD" id="7125"/>
<dbReference type="MGI" id="MGI:98780">
    <property type="gene designation" value="Tnnc2"/>
</dbReference>
<dbReference type="VEuPathDB" id="HostDB:ENSMUSG00000017300"/>
<dbReference type="eggNOG" id="KOG0027">
    <property type="taxonomic scope" value="Eukaryota"/>
</dbReference>
<dbReference type="GeneTree" id="ENSGT00940000153541"/>
<dbReference type="HOGENOM" id="CLU_061288_2_5_1"/>
<dbReference type="InParanoid" id="P20801"/>
<dbReference type="OMA" id="QVEARSY"/>
<dbReference type="OrthoDB" id="26525at2759"/>
<dbReference type="PhylomeDB" id="P20801"/>
<dbReference type="TreeFam" id="TF318191"/>
<dbReference type="Reactome" id="R-MMU-390522">
    <property type="pathway name" value="Striated Muscle Contraction"/>
</dbReference>
<dbReference type="BioGRID-ORCS" id="21925">
    <property type="hits" value="3 hits in 76 CRISPR screens"/>
</dbReference>
<dbReference type="ChiTaRS" id="Tnnc2">
    <property type="organism name" value="mouse"/>
</dbReference>
<dbReference type="PRO" id="PR:P20801"/>
<dbReference type="Proteomes" id="UP000000589">
    <property type="component" value="Chromosome 2"/>
</dbReference>
<dbReference type="RNAct" id="P20801">
    <property type="molecule type" value="protein"/>
</dbReference>
<dbReference type="Bgee" id="ENSMUSG00000017300">
    <property type="expression patterns" value="Expressed in intercostal muscle and 141 other cell types or tissues"/>
</dbReference>
<dbReference type="GO" id="GO:0005861">
    <property type="term" value="C:troponin complex"/>
    <property type="evidence" value="ECO:0007669"/>
    <property type="project" value="Ensembl"/>
</dbReference>
<dbReference type="GO" id="GO:0003779">
    <property type="term" value="F:actin binding"/>
    <property type="evidence" value="ECO:0007669"/>
    <property type="project" value="Ensembl"/>
</dbReference>
<dbReference type="GO" id="GO:0005509">
    <property type="term" value="F:calcium ion binding"/>
    <property type="evidence" value="ECO:0007669"/>
    <property type="project" value="InterPro"/>
</dbReference>
<dbReference type="GO" id="GO:0006937">
    <property type="term" value="P:regulation of muscle contraction"/>
    <property type="evidence" value="ECO:0000250"/>
    <property type="project" value="UniProtKB"/>
</dbReference>
<dbReference type="GO" id="GO:0003009">
    <property type="term" value="P:skeletal muscle contraction"/>
    <property type="evidence" value="ECO:0000250"/>
    <property type="project" value="UniProtKB"/>
</dbReference>
<dbReference type="FunFam" id="1.10.238.10:FF:000107">
    <property type="entry name" value="Troponin C, skeletal muscle"/>
    <property type="match status" value="1"/>
</dbReference>
<dbReference type="Gene3D" id="1.10.238.10">
    <property type="entry name" value="EF-hand"/>
    <property type="match status" value="2"/>
</dbReference>
<dbReference type="InterPro" id="IPR050230">
    <property type="entry name" value="CALM/Myosin/TropC-like"/>
</dbReference>
<dbReference type="InterPro" id="IPR011992">
    <property type="entry name" value="EF-hand-dom_pair"/>
</dbReference>
<dbReference type="InterPro" id="IPR018247">
    <property type="entry name" value="EF_Hand_1_Ca_BS"/>
</dbReference>
<dbReference type="InterPro" id="IPR002048">
    <property type="entry name" value="EF_hand_dom"/>
</dbReference>
<dbReference type="PANTHER" id="PTHR23048">
    <property type="entry name" value="MYOSIN LIGHT CHAIN 1, 3"/>
    <property type="match status" value="1"/>
</dbReference>
<dbReference type="PANTHER" id="PTHR23048:SF57">
    <property type="entry name" value="TROPONIN C2, FAST SKELETAL TYPE"/>
    <property type="match status" value="1"/>
</dbReference>
<dbReference type="Pfam" id="PF13499">
    <property type="entry name" value="EF-hand_7"/>
    <property type="match status" value="2"/>
</dbReference>
<dbReference type="SMART" id="SM00054">
    <property type="entry name" value="EFh"/>
    <property type="match status" value="4"/>
</dbReference>
<dbReference type="SUPFAM" id="SSF47473">
    <property type="entry name" value="EF-hand"/>
    <property type="match status" value="1"/>
</dbReference>
<dbReference type="PROSITE" id="PS00018">
    <property type="entry name" value="EF_HAND_1"/>
    <property type="match status" value="4"/>
</dbReference>
<dbReference type="PROSITE" id="PS50222">
    <property type="entry name" value="EF_HAND_2"/>
    <property type="match status" value="4"/>
</dbReference>
<accession>P20801</accession>
<proteinExistence type="evidence at protein level"/>
<name>TNNC2_MOUSE</name>
<gene>
    <name type="primary">Tnnc2</name>
    <name type="synonym">Tncs</name>
</gene>
<evidence type="ECO:0000250" key="1">
    <source>
        <dbReference type="UniProtKB" id="P02585"/>
    </source>
</evidence>
<evidence type="ECO:0000255" key="2">
    <source>
        <dbReference type="PROSITE-ProRule" id="PRU00448"/>
    </source>
</evidence>
<evidence type="ECO:0000305" key="3"/>
<organism>
    <name type="scientific">Mus musculus</name>
    <name type="common">Mouse</name>
    <dbReference type="NCBI Taxonomy" id="10090"/>
    <lineage>
        <taxon>Eukaryota</taxon>
        <taxon>Metazoa</taxon>
        <taxon>Chordata</taxon>
        <taxon>Craniata</taxon>
        <taxon>Vertebrata</taxon>
        <taxon>Euteleostomi</taxon>
        <taxon>Mammalia</taxon>
        <taxon>Eutheria</taxon>
        <taxon>Euarchontoglires</taxon>
        <taxon>Glires</taxon>
        <taxon>Rodentia</taxon>
        <taxon>Myomorpha</taxon>
        <taxon>Muroidea</taxon>
        <taxon>Muridae</taxon>
        <taxon>Murinae</taxon>
        <taxon>Mus</taxon>
        <taxon>Mus</taxon>
    </lineage>
</organism>
<comment type="function">
    <text evidence="1">Troponin is the central regulatory protein of striated muscle contraction. Tn consists of three components: Tn-I which is the inhibitor of actomyosin ATPase, Tn-T which contains the binding site for tropomyosin and Tn-C. The binding of calcium to Tn-C abolishes the inhibitory action of Tn on actin filaments.</text>
</comment>
<comment type="tissue specificity">
    <text>Fast skeletal muscle.</text>
</comment>
<comment type="miscellaneous">
    <text>Skeletal muscle troponin C binds four calcium ions.</text>
</comment>
<comment type="similarity">
    <text evidence="3">Belongs to the troponin C family.</text>
</comment>